<name>RUVC_AFIC5</name>
<gene>
    <name evidence="1" type="primary">ruvC</name>
    <name type="ordered locus">OCAR_7302</name>
    <name type="ordered locus">OCA5_c08140</name>
</gene>
<keyword id="KW-0963">Cytoplasm</keyword>
<keyword id="KW-0227">DNA damage</keyword>
<keyword id="KW-0233">DNA recombination</keyword>
<keyword id="KW-0234">DNA repair</keyword>
<keyword id="KW-0238">DNA-binding</keyword>
<keyword id="KW-0255">Endonuclease</keyword>
<keyword id="KW-0378">Hydrolase</keyword>
<keyword id="KW-0460">Magnesium</keyword>
<keyword id="KW-0479">Metal-binding</keyword>
<keyword id="KW-0540">Nuclease</keyword>
<keyword id="KW-1185">Reference proteome</keyword>
<comment type="function">
    <text evidence="1">The RuvA-RuvB-RuvC complex processes Holliday junction (HJ) DNA during genetic recombination and DNA repair. Endonuclease that resolves HJ intermediates. Cleaves cruciform DNA by making single-stranded nicks across the HJ at symmetrical positions within the homologous arms, yielding a 5'-phosphate and a 3'-hydroxyl group; requires a central core of homology in the junction. The consensus cleavage sequence is 5'-(A/T)TT(C/G)-3'. Cleavage occurs on the 3'-side of the TT dinucleotide at the point of strand exchange. HJ branch migration catalyzed by RuvA-RuvB allows RuvC to scan DNA until it finds its consensus sequence, where it cleaves and resolves the cruciform DNA.</text>
</comment>
<comment type="catalytic activity">
    <reaction evidence="1">
        <text>Endonucleolytic cleavage at a junction such as a reciprocal single-stranded crossover between two homologous DNA duplexes (Holliday junction).</text>
        <dbReference type="EC" id="3.1.21.10"/>
    </reaction>
</comment>
<comment type="cofactor">
    <cofactor evidence="1">
        <name>Mg(2+)</name>
        <dbReference type="ChEBI" id="CHEBI:18420"/>
    </cofactor>
    <text evidence="1">Binds 2 Mg(2+) ion per subunit.</text>
</comment>
<comment type="subunit">
    <text evidence="1">Homodimer which binds Holliday junction (HJ) DNA. The HJ becomes 2-fold symmetrical on binding to RuvC with unstacked arms; it has a different conformation from HJ DNA in complex with RuvA. In the full resolvosome a probable DNA-RuvA(4)-RuvB(12)-RuvC(2) complex forms which resolves the HJ.</text>
</comment>
<comment type="subcellular location">
    <subcellularLocation>
        <location evidence="1">Cytoplasm</location>
    </subcellularLocation>
</comment>
<comment type="similarity">
    <text evidence="1">Belongs to the RuvC family.</text>
</comment>
<dbReference type="EC" id="3.1.21.10" evidence="1"/>
<dbReference type="EMBL" id="CP001196">
    <property type="protein sequence ID" value="ACI94406.1"/>
    <property type="molecule type" value="Genomic_DNA"/>
</dbReference>
<dbReference type="EMBL" id="CP002826">
    <property type="protein sequence ID" value="AEI05536.1"/>
    <property type="molecule type" value="Genomic_DNA"/>
</dbReference>
<dbReference type="RefSeq" id="WP_012564432.1">
    <property type="nucleotide sequence ID" value="NC_015684.1"/>
</dbReference>
<dbReference type="SMR" id="B6JIZ7"/>
<dbReference type="STRING" id="504832.OCA5_c08140"/>
<dbReference type="KEGG" id="oca:OCAR_7302"/>
<dbReference type="KEGG" id="ocg:OCA5_c08140"/>
<dbReference type="PATRIC" id="fig|504832.7.peg.860"/>
<dbReference type="eggNOG" id="COG0817">
    <property type="taxonomic scope" value="Bacteria"/>
</dbReference>
<dbReference type="HOGENOM" id="CLU_091257_1_0_5"/>
<dbReference type="OrthoDB" id="9805499at2"/>
<dbReference type="Proteomes" id="UP000007730">
    <property type="component" value="Chromosome"/>
</dbReference>
<dbReference type="GO" id="GO:0005737">
    <property type="term" value="C:cytoplasm"/>
    <property type="evidence" value="ECO:0007669"/>
    <property type="project" value="UniProtKB-SubCell"/>
</dbReference>
<dbReference type="GO" id="GO:0048476">
    <property type="term" value="C:Holliday junction resolvase complex"/>
    <property type="evidence" value="ECO:0007669"/>
    <property type="project" value="UniProtKB-UniRule"/>
</dbReference>
<dbReference type="GO" id="GO:0008821">
    <property type="term" value="F:crossover junction DNA endonuclease activity"/>
    <property type="evidence" value="ECO:0007669"/>
    <property type="project" value="UniProtKB-UniRule"/>
</dbReference>
<dbReference type="GO" id="GO:0003677">
    <property type="term" value="F:DNA binding"/>
    <property type="evidence" value="ECO:0007669"/>
    <property type="project" value="UniProtKB-KW"/>
</dbReference>
<dbReference type="GO" id="GO:0000287">
    <property type="term" value="F:magnesium ion binding"/>
    <property type="evidence" value="ECO:0007669"/>
    <property type="project" value="UniProtKB-UniRule"/>
</dbReference>
<dbReference type="GO" id="GO:0006310">
    <property type="term" value="P:DNA recombination"/>
    <property type="evidence" value="ECO:0007669"/>
    <property type="project" value="UniProtKB-UniRule"/>
</dbReference>
<dbReference type="GO" id="GO:0006281">
    <property type="term" value="P:DNA repair"/>
    <property type="evidence" value="ECO:0007669"/>
    <property type="project" value="UniProtKB-UniRule"/>
</dbReference>
<dbReference type="CDD" id="cd16962">
    <property type="entry name" value="RuvC"/>
    <property type="match status" value="1"/>
</dbReference>
<dbReference type="FunFam" id="3.30.420.10:FF:000002">
    <property type="entry name" value="Crossover junction endodeoxyribonuclease RuvC"/>
    <property type="match status" value="1"/>
</dbReference>
<dbReference type="Gene3D" id="3.30.420.10">
    <property type="entry name" value="Ribonuclease H-like superfamily/Ribonuclease H"/>
    <property type="match status" value="1"/>
</dbReference>
<dbReference type="HAMAP" id="MF_00034">
    <property type="entry name" value="RuvC"/>
    <property type="match status" value="1"/>
</dbReference>
<dbReference type="InterPro" id="IPR012337">
    <property type="entry name" value="RNaseH-like_sf"/>
</dbReference>
<dbReference type="InterPro" id="IPR036397">
    <property type="entry name" value="RNaseH_sf"/>
</dbReference>
<dbReference type="InterPro" id="IPR020563">
    <property type="entry name" value="X-over_junc_endoDNase_Mg_BS"/>
</dbReference>
<dbReference type="InterPro" id="IPR002176">
    <property type="entry name" value="X-over_junc_endoDNase_RuvC"/>
</dbReference>
<dbReference type="NCBIfam" id="TIGR00228">
    <property type="entry name" value="ruvC"/>
    <property type="match status" value="1"/>
</dbReference>
<dbReference type="PANTHER" id="PTHR30194">
    <property type="entry name" value="CROSSOVER JUNCTION ENDODEOXYRIBONUCLEASE RUVC"/>
    <property type="match status" value="1"/>
</dbReference>
<dbReference type="PANTHER" id="PTHR30194:SF3">
    <property type="entry name" value="CROSSOVER JUNCTION ENDODEOXYRIBONUCLEASE RUVC"/>
    <property type="match status" value="1"/>
</dbReference>
<dbReference type="Pfam" id="PF02075">
    <property type="entry name" value="RuvC"/>
    <property type="match status" value="1"/>
</dbReference>
<dbReference type="PRINTS" id="PR00696">
    <property type="entry name" value="RSOLVASERUVC"/>
</dbReference>
<dbReference type="SUPFAM" id="SSF53098">
    <property type="entry name" value="Ribonuclease H-like"/>
    <property type="match status" value="1"/>
</dbReference>
<dbReference type="PROSITE" id="PS01321">
    <property type="entry name" value="RUVC"/>
    <property type="match status" value="1"/>
</dbReference>
<proteinExistence type="inferred from homology"/>
<feature type="chain" id="PRO_1000090542" description="Crossover junction endodeoxyribonuclease RuvC">
    <location>
        <begin position="1"/>
        <end position="171"/>
    </location>
</feature>
<feature type="active site" evidence="1">
    <location>
        <position position="12"/>
    </location>
</feature>
<feature type="active site" evidence="1">
    <location>
        <position position="72"/>
    </location>
</feature>
<feature type="active site" evidence="1">
    <location>
        <position position="144"/>
    </location>
</feature>
<feature type="binding site" evidence="1">
    <location>
        <position position="12"/>
    </location>
    <ligand>
        <name>Mg(2+)</name>
        <dbReference type="ChEBI" id="CHEBI:18420"/>
        <label>1</label>
    </ligand>
</feature>
<feature type="binding site" evidence="1">
    <location>
        <position position="72"/>
    </location>
    <ligand>
        <name>Mg(2+)</name>
        <dbReference type="ChEBI" id="CHEBI:18420"/>
        <label>2</label>
    </ligand>
</feature>
<feature type="binding site" evidence="1">
    <location>
        <position position="144"/>
    </location>
    <ligand>
        <name>Mg(2+)</name>
        <dbReference type="ChEBI" id="CHEBI:18420"/>
        <label>1</label>
    </ligand>
</feature>
<evidence type="ECO:0000255" key="1">
    <source>
        <dbReference type="HAMAP-Rule" id="MF_00034"/>
    </source>
</evidence>
<protein>
    <recommendedName>
        <fullName evidence="1">Crossover junction endodeoxyribonuclease RuvC</fullName>
        <ecNumber evidence="1">3.1.21.10</ecNumber>
    </recommendedName>
    <alternativeName>
        <fullName evidence="1">Holliday junction nuclease RuvC</fullName>
    </alternativeName>
    <alternativeName>
        <fullName evidence="1">Holliday junction resolvase RuvC</fullName>
    </alternativeName>
</protein>
<sequence length="171" mass="18212">MISRTIRILGIDPGLRRTGWGVIDVEGNRLIFVACGTVESRESLPLSERLLAIHEGLVRVVSEHRPLEAAVEQTFVNKDGAGTLKLGQARGVAMLVPAMSGISVAEYAPNLVKKTVVGAGHADKNQIQVMLKILLPKAAPPTPDAADALAIAITHAHHRQSAMLLRKVAAL</sequence>
<accession>B6JIZ7</accession>
<accession>F8BZ45</accession>
<reference key="1">
    <citation type="journal article" date="2008" name="J. Bacteriol.">
        <title>Genome sequence of the chemolithoautotrophic bacterium Oligotropha carboxidovorans OM5T.</title>
        <authorList>
            <person name="Paul D."/>
            <person name="Bridges S."/>
            <person name="Burgess S.C."/>
            <person name="Dandass Y."/>
            <person name="Lawrence M.L."/>
        </authorList>
    </citation>
    <scope>NUCLEOTIDE SEQUENCE [LARGE SCALE GENOMIC DNA]</scope>
    <source>
        <strain>ATCC 49405 / DSM 1227 / KCTC 32145 / OM5</strain>
    </source>
</reference>
<reference key="2">
    <citation type="journal article" date="2011" name="J. Bacteriol.">
        <title>Complete genome sequences of the chemolithoautotrophic Oligotropha carboxidovorans strains OM4 and OM5.</title>
        <authorList>
            <person name="Volland S."/>
            <person name="Rachinger M."/>
            <person name="Strittmatter A."/>
            <person name="Daniel R."/>
            <person name="Gottschalk G."/>
            <person name="Meyer O."/>
        </authorList>
    </citation>
    <scope>NUCLEOTIDE SEQUENCE [LARGE SCALE GENOMIC DNA]</scope>
    <source>
        <strain>ATCC 49405 / DSM 1227 / KCTC 32145 / OM5</strain>
    </source>
</reference>
<organism>
    <name type="scientific">Afipia carboxidovorans (strain ATCC 49405 / DSM 1227 / KCTC 32145 / OM5)</name>
    <name type="common">Oligotropha carboxidovorans</name>
    <dbReference type="NCBI Taxonomy" id="504832"/>
    <lineage>
        <taxon>Bacteria</taxon>
        <taxon>Pseudomonadati</taxon>
        <taxon>Pseudomonadota</taxon>
        <taxon>Alphaproteobacteria</taxon>
        <taxon>Hyphomicrobiales</taxon>
        <taxon>Nitrobacteraceae</taxon>
        <taxon>Afipia</taxon>
    </lineage>
</organism>